<evidence type="ECO:0000255" key="1">
    <source>
        <dbReference type="HAMAP-Rule" id="MF_00141"/>
    </source>
</evidence>
<organism>
    <name type="scientific">Chlorobium limicola (strain DSM 245 / NBRC 103803 / 6330)</name>
    <dbReference type="NCBI Taxonomy" id="290315"/>
    <lineage>
        <taxon>Bacteria</taxon>
        <taxon>Pseudomonadati</taxon>
        <taxon>Chlorobiota</taxon>
        <taxon>Chlorobiia</taxon>
        <taxon>Chlorobiales</taxon>
        <taxon>Chlorobiaceae</taxon>
        <taxon>Chlorobium/Pelodictyon group</taxon>
        <taxon>Chlorobium</taxon>
    </lineage>
</organism>
<feature type="chain" id="PRO_1000096134" description="Elongation factor P">
    <location>
        <begin position="1"/>
        <end position="188"/>
    </location>
</feature>
<name>EFP_CHLL2</name>
<proteinExistence type="inferred from homology"/>
<comment type="function">
    <text evidence="1">Involved in peptide bond synthesis. Stimulates efficient translation and peptide-bond synthesis on native or reconstituted 70S ribosomes in vitro. Probably functions indirectly by altering the affinity of the ribosome for aminoacyl-tRNA, thus increasing their reactivity as acceptors for peptidyl transferase.</text>
</comment>
<comment type="pathway">
    <text evidence="1">Protein biosynthesis; polypeptide chain elongation.</text>
</comment>
<comment type="subcellular location">
    <subcellularLocation>
        <location evidence="1">Cytoplasm</location>
    </subcellularLocation>
</comment>
<comment type="similarity">
    <text evidence="1">Belongs to the elongation factor P family.</text>
</comment>
<keyword id="KW-0963">Cytoplasm</keyword>
<keyword id="KW-0251">Elongation factor</keyword>
<keyword id="KW-0648">Protein biosynthesis</keyword>
<gene>
    <name evidence="1" type="primary">efp</name>
    <name type="ordered locus">Clim_0200</name>
</gene>
<sequence length="188" mass="21101">MTSISNVSKGSIIRFKGEPHIIESLVHRTPGNLRAFYQANMKNLKTGRNVEYRFSASESVDLIVTERKQYQYLYRDGNDYVMMDNDTFDQINVQELSIGPSARFLKDGINVTIIFSDDGSILDVELPTFVEVEVMETSPATKDDRATSGTKPATVETGAEVSVPMFIQCGSVIRVDTRTGEYIERVKK</sequence>
<protein>
    <recommendedName>
        <fullName evidence="1">Elongation factor P</fullName>
        <shortName evidence="1">EF-P</shortName>
    </recommendedName>
</protein>
<dbReference type="EMBL" id="CP001097">
    <property type="protein sequence ID" value="ACD89299.1"/>
    <property type="molecule type" value="Genomic_DNA"/>
</dbReference>
<dbReference type="RefSeq" id="WP_012465180.1">
    <property type="nucleotide sequence ID" value="NC_010803.1"/>
</dbReference>
<dbReference type="SMR" id="B3EER6"/>
<dbReference type="STRING" id="290315.Clim_0200"/>
<dbReference type="KEGG" id="cli:Clim_0200"/>
<dbReference type="eggNOG" id="COG0231">
    <property type="taxonomic scope" value="Bacteria"/>
</dbReference>
<dbReference type="HOGENOM" id="CLU_074944_0_1_10"/>
<dbReference type="OrthoDB" id="9801844at2"/>
<dbReference type="UniPathway" id="UPA00345"/>
<dbReference type="Proteomes" id="UP000008841">
    <property type="component" value="Chromosome"/>
</dbReference>
<dbReference type="GO" id="GO:0005737">
    <property type="term" value="C:cytoplasm"/>
    <property type="evidence" value="ECO:0007669"/>
    <property type="project" value="UniProtKB-SubCell"/>
</dbReference>
<dbReference type="GO" id="GO:0003746">
    <property type="term" value="F:translation elongation factor activity"/>
    <property type="evidence" value="ECO:0007669"/>
    <property type="project" value="UniProtKB-UniRule"/>
</dbReference>
<dbReference type="GO" id="GO:0043043">
    <property type="term" value="P:peptide biosynthetic process"/>
    <property type="evidence" value="ECO:0007669"/>
    <property type="project" value="InterPro"/>
</dbReference>
<dbReference type="CDD" id="cd04470">
    <property type="entry name" value="S1_EF-P_repeat_1"/>
    <property type="match status" value="1"/>
</dbReference>
<dbReference type="CDD" id="cd05794">
    <property type="entry name" value="S1_EF-P_repeat_2"/>
    <property type="match status" value="1"/>
</dbReference>
<dbReference type="FunFam" id="2.40.50.140:FF:000004">
    <property type="entry name" value="Elongation factor P"/>
    <property type="match status" value="1"/>
</dbReference>
<dbReference type="FunFam" id="2.40.50.140:FF:000009">
    <property type="entry name" value="Elongation factor P"/>
    <property type="match status" value="1"/>
</dbReference>
<dbReference type="Gene3D" id="2.30.30.30">
    <property type="match status" value="1"/>
</dbReference>
<dbReference type="Gene3D" id="2.40.50.140">
    <property type="entry name" value="Nucleic acid-binding proteins"/>
    <property type="match status" value="2"/>
</dbReference>
<dbReference type="HAMAP" id="MF_00141">
    <property type="entry name" value="EF_P"/>
    <property type="match status" value="1"/>
</dbReference>
<dbReference type="InterPro" id="IPR015365">
    <property type="entry name" value="Elong-fact-P_C"/>
</dbReference>
<dbReference type="InterPro" id="IPR012340">
    <property type="entry name" value="NA-bd_OB-fold"/>
</dbReference>
<dbReference type="InterPro" id="IPR014722">
    <property type="entry name" value="Rib_uL2_dom2"/>
</dbReference>
<dbReference type="InterPro" id="IPR020599">
    <property type="entry name" value="Transl_elong_fac_P/YeiP"/>
</dbReference>
<dbReference type="InterPro" id="IPR013185">
    <property type="entry name" value="Transl_elong_KOW-like"/>
</dbReference>
<dbReference type="InterPro" id="IPR001059">
    <property type="entry name" value="Transl_elong_P/YeiP_cen"/>
</dbReference>
<dbReference type="InterPro" id="IPR013852">
    <property type="entry name" value="Transl_elong_P/YeiP_CS"/>
</dbReference>
<dbReference type="InterPro" id="IPR011768">
    <property type="entry name" value="Transl_elongation_fac_P"/>
</dbReference>
<dbReference type="InterPro" id="IPR008991">
    <property type="entry name" value="Translation_prot_SH3-like_sf"/>
</dbReference>
<dbReference type="NCBIfam" id="TIGR00038">
    <property type="entry name" value="efp"/>
    <property type="match status" value="1"/>
</dbReference>
<dbReference type="NCBIfam" id="NF001810">
    <property type="entry name" value="PRK00529.1"/>
    <property type="match status" value="1"/>
</dbReference>
<dbReference type="PANTHER" id="PTHR30053">
    <property type="entry name" value="ELONGATION FACTOR P"/>
    <property type="match status" value="1"/>
</dbReference>
<dbReference type="PANTHER" id="PTHR30053:SF12">
    <property type="entry name" value="ELONGATION FACTOR P (EF-P) FAMILY PROTEIN"/>
    <property type="match status" value="1"/>
</dbReference>
<dbReference type="Pfam" id="PF01132">
    <property type="entry name" value="EFP"/>
    <property type="match status" value="1"/>
</dbReference>
<dbReference type="Pfam" id="PF08207">
    <property type="entry name" value="EFP_N"/>
    <property type="match status" value="1"/>
</dbReference>
<dbReference type="Pfam" id="PF09285">
    <property type="entry name" value="Elong-fact-P_C"/>
    <property type="match status" value="1"/>
</dbReference>
<dbReference type="PIRSF" id="PIRSF005901">
    <property type="entry name" value="EF-P"/>
    <property type="match status" value="1"/>
</dbReference>
<dbReference type="SMART" id="SM01185">
    <property type="entry name" value="EFP"/>
    <property type="match status" value="1"/>
</dbReference>
<dbReference type="SMART" id="SM00841">
    <property type="entry name" value="Elong-fact-P_C"/>
    <property type="match status" value="1"/>
</dbReference>
<dbReference type="SUPFAM" id="SSF50249">
    <property type="entry name" value="Nucleic acid-binding proteins"/>
    <property type="match status" value="2"/>
</dbReference>
<dbReference type="SUPFAM" id="SSF50104">
    <property type="entry name" value="Translation proteins SH3-like domain"/>
    <property type="match status" value="1"/>
</dbReference>
<dbReference type="PROSITE" id="PS01275">
    <property type="entry name" value="EFP"/>
    <property type="match status" value="1"/>
</dbReference>
<accession>B3EER6</accession>
<reference key="1">
    <citation type="submission" date="2008-05" db="EMBL/GenBank/DDBJ databases">
        <title>Complete sequence of Chlorobium limicola DSM 245.</title>
        <authorList>
            <consortium name="US DOE Joint Genome Institute"/>
            <person name="Lucas S."/>
            <person name="Copeland A."/>
            <person name="Lapidus A."/>
            <person name="Glavina del Rio T."/>
            <person name="Dalin E."/>
            <person name="Tice H."/>
            <person name="Bruce D."/>
            <person name="Goodwin L."/>
            <person name="Pitluck S."/>
            <person name="Schmutz J."/>
            <person name="Larimer F."/>
            <person name="Land M."/>
            <person name="Hauser L."/>
            <person name="Kyrpides N."/>
            <person name="Ovchinnikova G."/>
            <person name="Zhao F."/>
            <person name="Li T."/>
            <person name="Liu Z."/>
            <person name="Overmann J."/>
            <person name="Bryant D.A."/>
            <person name="Richardson P."/>
        </authorList>
    </citation>
    <scope>NUCLEOTIDE SEQUENCE [LARGE SCALE GENOMIC DNA]</scope>
    <source>
        <strain>DSM 245 / NBRC 103803 / 6330</strain>
    </source>
</reference>